<gene>
    <name evidence="1" type="primary">rlmN</name>
    <name type="ordered locus">TRQ2_1119</name>
</gene>
<dbReference type="EC" id="2.1.1.192" evidence="1"/>
<dbReference type="EMBL" id="CP000969">
    <property type="protein sequence ID" value="ACB09465.1"/>
    <property type="molecule type" value="Genomic_DNA"/>
</dbReference>
<dbReference type="RefSeq" id="WP_012310954.1">
    <property type="nucleotide sequence ID" value="NC_010483.1"/>
</dbReference>
<dbReference type="SMR" id="B1LAW7"/>
<dbReference type="KEGG" id="trq:TRQ2_1119"/>
<dbReference type="HOGENOM" id="CLU_029101_2_0_0"/>
<dbReference type="Proteomes" id="UP000001687">
    <property type="component" value="Chromosome"/>
</dbReference>
<dbReference type="GO" id="GO:0005737">
    <property type="term" value="C:cytoplasm"/>
    <property type="evidence" value="ECO:0007669"/>
    <property type="project" value="UniProtKB-SubCell"/>
</dbReference>
<dbReference type="GO" id="GO:0051539">
    <property type="term" value="F:4 iron, 4 sulfur cluster binding"/>
    <property type="evidence" value="ECO:0007669"/>
    <property type="project" value="UniProtKB-UniRule"/>
</dbReference>
<dbReference type="GO" id="GO:0046872">
    <property type="term" value="F:metal ion binding"/>
    <property type="evidence" value="ECO:0007669"/>
    <property type="project" value="UniProtKB-KW"/>
</dbReference>
<dbReference type="GO" id="GO:0070040">
    <property type="term" value="F:rRNA (adenine(2503)-C2-)-methyltransferase activity"/>
    <property type="evidence" value="ECO:0007669"/>
    <property type="project" value="UniProtKB-UniRule"/>
</dbReference>
<dbReference type="GO" id="GO:0019843">
    <property type="term" value="F:rRNA binding"/>
    <property type="evidence" value="ECO:0007669"/>
    <property type="project" value="UniProtKB-UniRule"/>
</dbReference>
<dbReference type="GO" id="GO:0002935">
    <property type="term" value="F:tRNA (adenine(37)-C2)-methyltransferase activity"/>
    <property type="evidence" value="ECO:0007669"/>
    <property type="project" value="UniProtKB-UniRule"/>
</dbReference>
<dbReference type="GO" id="GO:0000049">
    <property type="term" value="F:tRNA binding"/>
    <property type="evidence" value="ECO:0007669"/>
    <property type="project" value="UniProtKB-UniRule"/>
</dbReference>
<dbReference type="GO" id="GO:0070475">
    <property type="term" value="P:rRNA base methylation"/>
    <property type="evidence" value="ECO:0007669"/>
    <property type="project" value="UniProtKB-UniRule"/>
</dbReference>
<dbReference type="GO" id="GO:0030488">
    <property type="term" value="P:tRNA methylation"/>
    <property type="evidence" value="ECO:0007669"/>
    <property type="project" value="UniProtKB-UniRule"/>
</dbReference>
<dbReference type="CDD" id="cd01335">
    <property type="entry name" value="Radical_SAM"/>
    <property type="match status" value="1"/>
</dbReference>
<dbReference type="FunFam" id="1.10.150.530:FF:000006">
    <property type="entry name" value="Probable dual-specificity RNA methyltransferase RlmN"/>
    <property type="match status" value="1"/>
</dbReference>
<dbReference type="FunFam" id="3.20.20.70:FF:000014">
    <property type="entry name" value="Probable dual-specificity RNA methyltransferase RlmN"/>
    <property type="match status" value="1"/>
</dbReference>
<dbReference type="Gene3D" id="1.10.150.530">
    <property type="match status" value="1"/>
</dbReference>
<dbReference type="Gene3D" id="3.20.20.70">
    <property type="entry name" value="Aldolase class I"/>
    <property type="match status" value="1"/>
</dbReference>
<dbReference type="HAMAP" id="MF_01849">
    <property type="entry name" value="RNA_methyltr_RlmN"/>
    <property type="match status" value="1"/>
</dbReference>
<dbReference type="InterPro" id="IPR013785">
    <property type="entry name" value="Aldolase_TIM"/>
</dbReference>
<dbReference type="InterPro" id="IPR006638">
    <property type="entry name" value="Elp3/MiaA/NifB-like_rSAM"/>
</dbReference>
<dbReference type="InterPro" id="IPR040072">
    <property type="entry name" value="Methyltransferase_A"/>
</dbReference>
<dbReference type="InterPro" id="IPR048641">
    <property type="entry name" value="RlmN_N"/>
</dbReference>
<dbReference type="InterPro" id="IPR027492">
    <property type="entry name" value="RNA_MTrfase_RlmN"/>
</dbReference>
<dbReference type="InterPro" id="IPR004383">
    <property type="entry name" value="rRNA_lsu_MTrfase_RlmN/Cfr"/>
</dbReference>
<dbReference type="InterPro" id="IPR007197">
    <property type="entry name" value="rSAM"/>
</dbReference>
<dbReference type="NCBIfam" id="TIGR00048">
    <property type="entry name" value="rRNA_mod_RlmN"/>
    <property type="match status" value="1"/>
</dbReference>
<dbReference type="PANTHER" id="PTHR30544">
    <property type="entry name" value="23S RRNA METHYLTRANSFERASE"/>
    <property type="match status" value="1"/>
</dbReference>
<dbReference type="PANTHER" id="PTHR30544:SF5">
    <property type="entry name" value="RADICAL SAM CORE DOMAIN-CONTAINING PROTEIN"/>
    <property type="match status" value="1"/>
</dbReference>
<dbReference type="Pfam" id="PF04055">
    <property type="entry name" value="Radical_SAM"/>
    <property type="match status" value="1"/>
</dbReference>
<dbReference type="Pfam" id="PF21016">
    <property type="entry name" value="RlmN_N"/>
    <property type="match status" value="1"/>
</dbReference>
<dbReference type="PIRSF" id="PIRSF006004">
    <property type="entry name" value="CHP00048"/>
    <property type="match status" value="1"/>
</dbReference>
<dbReference type="SFLD" id="SFLDF00275">
    <property type="entry name" value="adenosine_C2_methyltransferase"/>
    <property type="match status" value="1"/>
</dbReference>
<dbReference type="SFLD" id="SFLDG01062">
    <property type="entry name" value="methyltransferase_(Class_A)"/>
    <property type="match status" value="1"/>
</dbReference>
<dbReference type="SMART" id="SM00729">
    <property type="entry name" value="Elp3"/>
    <property type="match status" value="1"/>
</dbReference>
<dbReference type="SUPFAM" id="SSF102114">
    <property type="entry name" value="Radical SAM enzymes"/>
    <property type="match status" value="1"/>
</dbReference>
<dbReference type="PROSITE" id="PS51918">
    <property type="entry name" value="RADICAL_SAM"/>
    <property type="match status" value="1"/>
</dbReference>
<reference key="1">
    <citation type="journal article" date="2011" name="J. Bacteriol.">
        <title>Genome sequence of Thermotoga sp. strain RQ2, a hyperthermophilic bacterium isolated from a geothermally heated region of the seafloor near Ribeira Quente, the Azores.</title>
        <authorList>
            <person name="Swithers K.S."/>
            <person name="DiPippo J.L."/>
            <person name="Bruce D.C."/>
            <person name="Detter C."/>
            <person name="Tapia R."/>
            <person name="Han S."/>
            <person name="Saunders E."/>
            <person name="Goodwin L.A."/>
            <person name="Han J."/>
            <person name="Woyke T."/>
            <person name="Pitluck S."/>
            <person name="Pennacchio L."/>
            <person name="Nolan M."/>
            <person name="Mikhailova N."/>
            <person name="Lykidis A."/>
            <person name="Land M.L."/>
            <person name="Brettin T."/>
            <person name="Stetter K.O."/>
            <person name="Nelson K.E."/>
            <person name="Gogarten J.P."/>
            <person name="Noll K.M."/>
        </authorList>
    </citation>
    <scope>NUCLEOTIDE SEQUENCE [LARGE SCALE GENOMIC DNA]</scope>
    <source>
        <strain>RQ2</strain>
    </source>
</reference>
<sequence length="343" mass="39084">MKNLLDLSYEELVAEVTSLGLERYRADQILDWVFNKKVNNFDEMTNLSKQHRALLKEHFSIPFLKLLDKKVSRIDGTTKFLWELEDGNTIESVMLFHPDRITACISTQVGCPVKCIFCATGMSGFVRNLTTGEIVAQILSMEREEKKKIGNVVYMGMGEPLLNYENTIKSIRILNHKKMGNIGIRRITISTVGIPDRIIQLAEEGLDVKLALSLHAPTNFKRDQLVPLNKKYSIEEILNAVKIYQRKTGNRVTIEYVLIRGINDEISDAKKLAEILKNMKIFVNLIPVNPTAEDLKKPSRERLLAFKRILLENGIEAEIRREKGSDIEAACGQLRLKRIKSTS</sequence>
<name>RLMN_THESQ</name>
<proteinExistence type="inferred from homology"/>
<comment type="function">
    <text evidence="1">Specifically methylates position 2 of adenine 2503 in 23S rRNA and position 2 of adenine 37 in tRNAs.</text>
</comment>
<comment type="catalytic activity">
    <reaction evidence="1">
        <text>adenosine(2503) in 23S rRNA + 2 reduced [2Fe-2S]-[ferredoxin] + 2 S-adenosyl-L-methionine = 2-methyladenosine(2503) in 23S rRNA + 5'-deoxyadenosine + L-methionine + 2 oxidized [2Fe-2S]-[ferredoxin] + S-adenosyl-L-homocysteine</text>
        <dbReference type="Rhea" id="RHEA:42916"/>
        <dbReference type="Rhea" id="RHEA-COMP:10000"/>
        <dbReference type="Rhea" id="RHEA-COMP:10001"/>
        <dbReference type="Rhea" id="RHEA-COMP:10152"/>
        <dbReference type="Rhea" id="RHEA-COMP:10282"/>
        <dbReference type="ChEBI" id="CHEBI:17319"/>
        <dbReference type="ChEBI" id="CHEBI:33737"/>
        <dbReference type="ChEBI" id="CHEBI:33738"/>
        <dbReference type="ChEBI" id="CHEBI:57844"/>
        <dbReference type="ChEBI" id="CHEBI:57856"/>
        <dbReference type="ChEBI" id="CHEBI:59789"/>
        <dbReference type="ChEBI" id="CHEBI:74411"/>
        <dbReference type="ChEBI" id="CHEBI:74497"/>
        <dbReference type="EC" id="2.1.1.192"/>
    </reaction>
</comment>
<comment type="catalytic activity">
    <reaction evidence="1">
        <text>adenosine(37) in tRNA + 2 reduced [2Fe-2S]-[ferredoxin] + 2 S-adenosyl-L-methionine = 2-methyladenosine(37) in tRNA + 5'-deoxyadenosine + L-methionine + 2 oxidized [2Fe-2S]-[ferredoxin] + S-adenosyl-L-homocysteine</text>
        <dbReference type="Rhea" id="RHEA:43332"/>
        <dbReference type="Rhea" id="RHEA-COMP:10000"/>
        <dbReference type="Rhea" id="RHEA-COMP:10001"/>
        <dbReference type="Rhea" id="RHEA-COMP:10162"/>
        <dbReference type="Rhea" id="RHEA-COMP:10485"/>
        <dbReference type="ChEBI" id="CHEBI:17319"/>
        <dbReference type="ChEBI" id="CHEBI:33737"/>
        <dbReference type="ChEBI" id="CHEBI:33738"/>
        <dbReference type="ChEBI" id="CHEBI:57844"/>
        <dbReference type="ChEBI" id="CHEBI:57856"/>
        <dbReference type="ChEBI" id="CHEBI:59789"/>
        <dbReference type="ChEBI" id="CHEBI:74411"/>
        <dbReference type="ChEBI" id="CHEBI:74497"/>
        <dbReference type="EC" id="2.1.1.192"/>
    </reaction>
</comment>
<comment type="cofactor">
    <cofactor evidence="1">
        <name>[4Fe-4S] cluster</name>
        <dbReference type="ChEBI" id="CHEBI:49883"/>
    </cofactor>
    <text evidence="1">Binds 1 [4Fe-4S] cluster. The cluster is coordinated with 3 cysteines and an exchangeable S-adenosyl-L-methionine.</text>
</comment>
<comment type="subcellular location">
    <subcellularLocation>
        <location evidence="1">Cytoplasm</location>
    </subcellularLocation>
</comment>
<comment type="miscellaneous">
    <text evidence="1">Reaction proceeds by a ping-pong mechanism involving intermediate methylation of a conserved cysteine residue.</text>
</comment>
<comment type="similarity">
    <text evidence="1">Belongs to the radical SAM superfamily. RlmN family.</text>
</comment>
<protein>
    <recommendedName>
        <fullName evidence="1">Probable dual-specificity RNA methyltransferase RlmN</fullName>
        <ecNumber evidence="1">2.1.1.192</ecNumber>
    </recommendedName>
    <alternativeName>
        <fullName evidence="1">23S rRNA (adenine(2503)-C(2))-methyltransferase</fullName>
    </alternativeName>
    <alternativeName>
        <fullName evidence="1">23S rRNA m2A2503 methyltransferase</fullName>
    </alternativeName>
    <alternativeName>
        <fullName evidence="1">Ribosomal RNA large subunit methyltransferase N</fullName>
    </alternativeName>
    <alternativeName>
        <fullName evidence="1">tRNA (adenine(37)-C(2))-methyltransferase</fullName>
    </alternativeName>
    <alternativeName>
        <fullName evidence="1">tRNA m2A37 methyltransferase</fullName>
    </alternativeName>
</protein>
<feature type="chain" id="PRO_0000350502" description="Probable dual-specificity RNA methyltransferase RlmN">
    <location>
        <begin position="1"/>
        <end position="343"/>
    </location>
</feature>
<feature type="domain" description="Radical SAM core" evidence="2">
    <location>
        <begin position="97"/>
        <end position="326"/>
    </location>
</feature>
<feature type="active site" description="Proton acceptor" evidence="1">
    <location>
        <position position="91"/>
    </location>
</feature>
<feature type="active site" description="S-methylcysteine intermediate" evidence="1">
    <location>
        <position position="331"/>
    </location>
</feature>
<feature type="binding site" evidence="1">
    <location>
        <position position="111"/>
    </location>
    <ligand>
        <name>[4Fe-4S] cluster</name>
        <dbReference type="ChEBI" id="CHEBI:49883"/>
        <note>4Fe-4S-S-AdoMet</note>
    </ligand>
</feature>
<feature type="binding site" evidence="1">
    <location>
        <position position="115"/>
    </location>
    <ligand>
        <name>[4Fe-4S] cluster</name>
        <dbReference type="ChEBI" id="CHEBI:49883"/>
        <note>4Fe-4S-S-AdoMet</note>
    </ligand>
</feature>
<feature type="binding site" evidence="1">
    <location>
        <position position="118"/>
    </location>
    <ligand>
        <name>[4Fe-4S] cluster</name>
        <dbReference type="ChEBI" id="CHEBI:49883"/>
        <note>4Fe-4S-S-AdoMet</note>
    </ligand>
</feature>
<feature type="binding site" evidence="1">
    <location>
        <begin position="158"/>
        <end position="159"/>
    </location>
    <ligand>
        <name>S-adenosyl-L-methionine</name>
        <dbReference type="ChEBI" id="CHEBI:59789"/>
    </ligand>
</feature>
<feature type="binding site" evidence="1">
    <location>
        <position position="190"/>
    </location>
    <ligand>
        <name>S-adenosyl-L-methionine</name>
        <dbReference type="ChEBI" id="CHEBI:59789"/>
    </ligand>
</feature>
<feature type="binding site" evidence="1">
    <location>
        <begin position="213"/>
        <end position="215"/>
    </location>
    <ligand>
        <name>S-adenosyl-L-methionine</name>
        <dbReference type="ChEBI" id="CHEBI:59789"/>
    </ligand>
</feature>
<feature type="binding site" evidence="1">
    <location>
        <position position="289"/>
    </location>
    <ligand>
        <name>S-adenosyl-L-methionine</name>
        <dbReference type="ChEBI" id="CHEBI:59789"/>
    </ligand>
</feature>
<feature type="disulfide bond" description="(transient)" evidence="1">
    <location>
        <begin position="104"/>
        <end position="331"/>
    </location>
</feature>
<organism>
    <name type="scientific">Thermotoga sp. (strain RQ2)</name>
    <dbReference type="NCBI Taxonomy" id="126740"/>
    <lineage>
        <taxon>Bacteria</taxon>
        <taxon>Thermotogati</taxon>
        <taxon>Thermotogota</taxon>
        <taxon>Thermotogae</taxon>
        <taxon>Thermotogales</taxon>
        <taxon>Thermotogaceae</taxon>
        <taxon>Thermotoga</taxon>
    </lineage>
</organism>
<keyword id="KW-0004">4Fe-4S</keyword>
<keyword id="KW-0963">Cytoplasm</keyword>
<keyword id="KW-1015">Disulfide bond</keyword>
<keyword id="KW-0408">Iron</keyword>
<keyword id="KW-0411">Iron-sulfur</keyword>
<keyword id="KW-0479">Metal-binding</keyword>
<keyword id="KW-0489">Methyltransferase</keyword>
<keyword id="KW-0698">rRNA processing</keyword>
<keyword id="KW-0949">S-adenosyl-L-methionine</keyword>
<keyword id="KW-0808">Transferase</keyword>
<keyword id="KW-0819">tRNA processing</keyword>
<evidence type="ECO:0000255" key="1">
    <source>
        <dbReference type="HAMAP-Rule" id="MF_01849"/>
    </source>
</evidence>
<evidence type="ECO:0000255" key="2">
    <source>
        <dbReference type="PROSITE-ProRule" id="PRU01266"/>
    </source>
</evidence>
<accession>B1LAW7</accession>